<name>KCY_METMA</name>
<proteinExistence type="inferred from homology"/>
<comment type="catalytic activity">
    <reaction>
        <text>CMP + ATP = CDP + ADP</text>
        <dbReference type="Rhea" id="RHEA:11600"/>
        <dbReference type="ChEBI" id="CHEBI:30616"/>
        <dbReference type="ChEBI" id="CHEBI:58069"/>
        <dbReference type="ChEBI" id="CHEBI:60377"/>
        <dbReference type="ChEBI" id="CHEBI:456216"/>
        <dbReference type="EC" id="2.7.4.25"/>
    </reaction>
</comment>
<comment type="catalytic activity">
    <reaction>
        <text>dCMP + ATP = dCDP + ADP</text>
        <dbReference type="Rhea" id="RHEA:25094"/>
        <dbReference type="ChEBI" id="CHEBI:30616"/>
        <dbReference type="ChEBI" id="CHEBI:57566"/>
        <dbReference type="ChEBI" id="CHEBI:58593"/>
        <dbReference type="ChEBI" id="CHEBI:456216"/>
        <dbReference type="EC" id="2.7.4.25"/>
    </reaction>
</comment>
<comment type="subcellular location">
    <subcellularLocation>
        <location evidence="1">Cytoplasm</location>
    </subcellularLocation>
</comment>
<comment type="similarity">
    <text evidence="2">Belongs to the cytidylate kinase family. Type 2 subfamily.</text>
</comment>
<comment type="sequence caution" evidence="2">
    <conflict type="erroneous initiation">
        <sequence resource="EMBL-CDS" id="AAM31849"/>
    </conflict>
</comment>
<organism>
    <name type="scientific">Methanosarcina mazei (strain ATCC BAA-159 / DSM 3647 / Goe1 / Go1 / JCM 11833 / OCM 88)</name>
    <name type="common">Methanosarcina frisia</name>
    <dbReference type="NCBI Taxonomy" id="192952"/>
    <lineage>
        <taxon>Archaea</taxon>
        <taxon>Methanobacteriati</taxon>
        <taxon>Methanobacteriota</taxon>
        <taxon>Stenosarchaea group</taxon>
        <taxon>Methanomicrobia</taxon>
        <taxon>Methanosarcinales</taxon>
        <taxon>Methanosarcinaceae</taxon>
        <taxon>Methanosarcina</taxon>
    </lineage>
</organism>
<reference key="1">
    <citation type="journal article" date="2002" name="J. Mol. Microbiol. Biotechnol.">
        <title>The genome of Methanosarcina mazei: evidence for lateral gene transfer between Bacteria and Archaea.</title>
        <authorList>
            <person name="Deppenmeier U."/>
            <person name="Johann A."/>
            <person name="Hartsch T."/>
            <person name="Merkl R."/>
            <person name="Schmitz R.A."/>
            <person name="Martinez-Arias R."/>
            <person name="Henne A."/>
            <person name="Wiezer A."/>
            <person name="Baeumer S."/>
            <person name="Jacobi C."/>
            <person name="Brueggemann H."/>
            <person name="Lienard T."/>
            <person name="Christmann A."/>
            <person name="Boemecke M."/>
            <person name="Steckel S."/>
            <person name="Bhattacharyya A."/>
            <person name="Lykidis A."/>
            <person name="Overbeek R."/>
            <person name="Klenk H.-P."/>
            <person name="Gunsalus R.P."/>
            <person name="Fritz H.-J."/>
            <person name="Gottschalk G."/>
        </authorList>
    </citation>
    <scope>NUCLEOTIDE SEQUENCE [LARGE SCALE GENOMIC DNA]</scope>
    <source>
        <strain>ATCC BAA-159 / DSM 3647 / Goe1 / Go1 / JCM 11833 / OCM 88</strain>
    </source>
</reference>
<dbReference type="EC" id="2.7.4.25"/>
<dbReference type="EMBL" id="AE008384">
    <property type="protein sequence ID" value="AAM31849.1"/>
    <property type="status" value="ALT_INIT"/>
    <property type="molecule type" value="Genomic_DNA"/>
</dbReference>
<dbReference type="RefSeq" id="WP_015412339.1">
    <property type="nucleotide sequence ID" value="NC_003901.1"/>
</dbReference>
<dbReference type="SMR" id="Q8PV21"/>
<dbReference type="GeneID" id="82161211"/>
<dbReference type="KEGG" id="mma:MM_2153"/>
<dbReference type="PATRIC" id="fig|192952.21.peg.2469"/>
<dbReference type="eggNOG" id="arCOG01037">
    <property type="taxonomic scope" value="Archaea"/>
</dbReference>
<dbReference type="HOGENOM" id="CLU_079959_1_0_2"/>
<dbReference type="Proteomes" id="UP000000595">
    <property type="component" value="Chromosome"/>
</dbReference>
<dbReference type="GO" id="GO:0005737">
    <property type="term" value="C:cytoplasm"/>
    <property type="evidence" value="ECO:0007669"/>
    <property type="project" value="UniProtKB-SubCell"/>
</dbReference>
<dbReference type="GO" id="GO:0005524">
    <property type="term" value="F:ATP binding"/>
    <property type="evidence" value="ECO:0007669"/>
    <property type="project" value="UniProtKB-UniRule"/>
</dbReference>
<dbReference type="GO" id="GO:0036430">
    <property type="term" value="F:CMP kinase activity"/>
    <property type="evidence" value="ECO:0007669"/>
    <property type="project" value="RHEA"/>
</dbReference>
<dbReference type="GO" id="GO:0036431">
    <property type="term" value="F:dCMP kinase activity"/>
    <property type="evidence" value="ECO:0007669"/>
    <property type="project" value="RHEA"/>
</dbReference>
<dbReference type="GO" id="GO:0006220">
    <property type="term" value="P:pyrimidine nucleotide metabolic process"/>
    <property type="evidence" value="ECO:0007669"/>
    <property type="project" value="UniProtKB-UniRule"/>
</dbReference>
<dbReference type="CDD" id="cd02020">
    <property type="entry name" value="CMPK"/>
    <property type="match status" value="1"/>
</dbReference>
<dbReference type="Gene3D" id="3.40.50.300">
    <property type="entry name" value="P-loop containing nucleotide triphosphate hydrolases"/>
    <property type="match status" value="1"/>
</dbReference>
<dbReference type="HAMAP" id="MF_00239">
    <property type="entry name" value="Cytidyl_kinase_type2"/>
    <property type="match status" value="1"/>
</dbReference>
<dbReference type="InterPro" id="IPR011892">
    <property type="entry name" value="Cyt_kin_arch"/>
</dbReference>
<dbReference type="InterPro" id="IPR011994">
    <property type="entry name" value="Cytidylate_kinase_dom"/>
</dbReference>
<dbReference type="InterPro" id="IPR027417">
    <property type="entry name" value="P-loop_NTPase"/>
</dbReference>
<dbReference type="NCBIfam" id="TIGR02173">
    <property type="entry name" value="cyt_kin_arch"/>
    <property type="match status" value="1"/>
</dbReference>
<dbReference type="Pfam" id="PF13189">
    <property type="entry name" value="Cytidylate_kin2"/>
    <property type="match status" value="1"/>
</dbReference>
<dbReference type="SUPFAM" id="SSF52540">
    <property type="entry name" value="P-loop containing nucleoside triphosphate hydrolases"/>
    <property type="match status" value="1"/>
</dbReference>
<accession>Q8PV21</accession>
<evidence type="ECO:0000250" key="1"/>
<evidence type="ECO:0000305" key="2"/>
<gene>
    <name type="primary">cmk</name>
    <name type="ordered locus">MM_2153</name>
</gene>
<sequence length="180" mass="20587">MQITVSGLPGSGTSTLSKLLAECYDLELISSGEIFRRMARERGMSLAEFGALAERDPSIDLDIDKNQKAIIHSRENIILESRLAGHMAQGRSDVIKIWIKAPLLTRVKRIQRREKTISFDEELKKTVERERSETLRYKNYYGIDITDLSIYDIVIDSEKWNQYQTLDILRVAIDALVGPE</sequence>
<keyword id="KW-0067">ATP-binding</keyword>
<keyword id="KW-0963">Cytoplasm</keyword>
<keyword id="KW-0418">Kinase</keyword>
<keyword id="KW-0547">Nucleotide-binding</keyword>
<keyword id="KW-0808">Transferase</keyword>
<protein>
    <recommendedName>
        <fullName>Cytidylate kinase</fullName>
        <shortName>CK</shortName>
        <ecNumber>2.7.4.25</ecNumber>
    </recommendedName>
    <alternativeName>
        <fullName>Cytidine monophosphate kinase</fullName>
        <shortName>CMP kinase</shortName>
    </alternativeName>
</protein>
<feature type="chain" id="PRO_0000132015" description="Cytidylate kinase">
    <location>
        <begin position="1"/>
        <end position="180"/>
    </location>
</feature>
<feature type="binding site" evidence="1">
    <location>
        <begin position="7"/>
        <end position="15"/>
    </location>
    <ligand>
        <name>ATP</name>
        <dbReference type="ChEBI" id="CHEBI:30616"/>
    </ligand>
</feature>